<gene>
    <name evidence="1" type="primary">tpiA</name>
    <name type="ordered locus">Spy49_0516</name>
</gene>
<reference key="1">
    <citation type="journal article" date="2008" name="J. Bacteriol.">
        <title>Genome sequence of a nephritogenic and highly transformable M49 strain of Streptococcus pyogenes.</title>
        <authorList>
            <person name="McShan W.M."/>
            <person name="Ferretti J.J."/>
            <person name="Karasawa T."/>
            <person name="Suvorov A.N."/>
            <person name="Lin S."/>
            <person name="Qin B."/>
            <person name="Jia H."/>
            <person name="Kenton S."/>
            <person name="Najar F."/>
            <person name="Wu H."/>
            <person name="Scott J."/>
            <person name="Roe B.A."/>
            <person name="Savic D.J."/>
        </authorList>
    </citation>
    <scope>NUCLEOTIDE SEQUENCE [LARGE SCALE GENOMIC DNA]</scope>
    <source>
        <strain>NZ131</strain>
    </source>
</reference>
<protein>
    <recommendedName>
        <fullName evidence="1">Triosephosphate isomerase</fullName>
        <shortName evidence="1">TIM</shortName>
        <shortName evidence="1">TPI</shortName>
        <ecNumber evidence="1">5.3.1.1</ecNumber>
    </recommendedName>
    <alternativeName>
        <fullName evidence="1">Triose-phosphate isomerase</fullName>
    </alternativeName>
</protein>
<feature type="chain" id="PRO_1000096540" description="Triosephosphate isomerase">
    <location>
        <begin position="1"/>
        <end position="252"/>
    </location>
</feature>
<feature type="active site" description="Electrophile" evidence="1">
    <location>
        <position position="96"/>
    </location>
</feature>
<feature type="active site" description="Proton acceptor" evidence="1">
    <location>
        <position position="168"/>
    </location>
</feature>
<feature type="binding site" evidence="1">
    <location>
        <begin position="10"/>
        <end position="12"/>
    </location>
    <ligand>
        <name>substrate</name>
    </ligand>
</feature>
<feature type="binding site" evidence="1">
    <location>
        <position position="174"/>
    </location>
    <ligand>
        <name>substrate</name>
    </ligand>
</feature>
<feature type="binding site" evidence="1">
    <location>
        <position position="214"/>
    </location>
    <ligand>
        <name>substrate</name>
    </ligand>
</feature>
<feature type="binding site" evidence="1">
    <location>
        <begin position="235"/>
        <end position="236"/>
    </location>
    <ligand>
        <name>substrate</name>
    </ligand>
</feature>
<keyword id="KW-0963">Cytoplasm</keyword>
<keyword id="KW-0312">Gluconeogenesis</keyword>
<keyword id="KW-0324">Glycolysis</keyword>
<keyword id="KW-0413">Isomerase</keyword>
<name>TPIS_STRPZ</name>
<organism>
    <name type="scientific">Streptococcus pyogenes serotype M49 (strain NZ131)</name>
    <dbReference type="NCBI Taxonomy" id="471876"/>
    <lineage>
        <taxon>Bacteria</taxon>
        <taxon>Bacillati</taxon>
        <taxon>Bacillota</taxon>
        <taxon>Bacilli</taxon>
        <taxon>Lactobacillales</taxon>
        <taxon>Streptococcaceae</taxon>
        <taxon>Streptococcus</taxon>
    </lineage>
</organism>
<evidence type="ECO:0000255" key="1">
    <source>
        <dbReference type="HAMAP-Rule" id="MF_00147"/>
    </source>
</evidence>
<sequence length="252" mass="26618">MSRKPIIAGNWKMNKNPQEAKAFVEAVASKLPSTDLVDVAVAAPAVDLVTTIEAAKDSVLKVAAQNCYFENTGAFTGETSPKVLAEMGADYVVIGHSERRDYFHETDEDINKKAKAIFANGLTPIVCCGESLETYEAGKAVEFVGAQVSAALAGLSAEQVASLVLAYEPIWAIGTGKSATQDDAQNMCKAVRDVVAADFGQEVADKVRVQYGGSVKPENVKDYMACPDVDGALVGGASLEADSFLALLDFLN</sequence>
<dbReference type="EC" id="5.3.1.1" evidence="1"/>
<dbReference type="EMBL" id="CP000829">
    <property type="protein sequence ID" value="ACI60844.1"/>
    <property type="molecule type" value="Genomic_DNA"/>
</dbReference>
<dbReference type="SMR" id="B5XKI2"/>
<dbReference type="KEGG" id="soz:Spy49_0516"/>
<dbReference type="HOGENOM" id="CLU_024251_2_3_9"/>
<dbReference type="UniPathway" id="UPA00109">
    <property type="reaction ID" value="UER00189"/>
</dbReference>
<dbReference type="UniPathway" id="UPA00138"/>
<dbReference type="Proteomes" id="UP000001039">
    <property type="component" value="Chromosome"/>
</dbReference>
<dbReference type="GO" id="GO:0005829">
    <property type="term" value="C:cytosol"/>
    <property type="evidence" value="ECO:0007669"/>
    <property type="project" value="TreeGrafter"/>
</dbReference>
<dbReference type="GO" id="GO:0004807">
    <property type="term" value="F:triose-phosphate isomerase activity"/>
    <property type="evidence" value="ECO:0007669"/>
    <property type="project" value="UniProtKB-UniRule"/>
</dbReference>
<dbReference type="GO" id="GO:0006094">
    <property type="term" value="P:gluconeogenesis"/>
    <property type="evidence" value="ECO:0007669"/>
    <property type="project" value="UniProtKB-UniRule"/>
</dbReference>
<dbReference type="GO" id="GO:0046166">
    <property type="term" value="P:glyceraldehyde-3-phosphate biosynthetic process"/>
    <property type="evidence" value="ECO:0007669"/>
    <property type="project" value="TreeGrafter"/>
</dbReference>
<dbReference type="GO" id="GO:0019563">
    <property type="term" value="P:glycerol catabolic process"/>
    <property type="evidence" value="ECO:0007669"/>
    <property type="project" value="TreeGrafter"/>
</dbReference>
<dbReference type="GO" id="GO:0006096">
    <property type="term" value="P:glycolytic process"/>
    <property type="evidence" value="ECO:0007669"/>
    <property type="project" value="UniProtKB-UniRule"/>
</dbReference>
<dbReference type="CDD" id="cd00311">
    <property type="entry name" value="TIM"/>
    <property type="match status" value="1"/>
</dbReference>
<dbReference type="FunFam" id="3.20.20.70:FF:000016">
    <property type="entry name" value="Triosephosphate isomerase"/>
    <property type="match status" value="1"/>
</dbReference>
<dbReference type="Gene3D" id="3.20.20.70">
    <property type="entry name" value="Aldolase class I"/>
    <property type="match status" value="1"/>
</dbReference>
<dbReference type="HAMAP" id="MF_00147_B">
    <property type="entry name" value="TIM_B"/>
    <property type="match status" value="1"/>
</dbReference>
<dbReference type="InterPro" id="IPR013785">
    <property type="entry name" value="Aldolase_TIM"/>
</dbReference>
<dbReference type="InterPro" id="IPR035990">
    <property type="entry name" value="TIM_sf"/>
</dbReference>
<dbReference type="InterPro" id="IPR022896">
    <property type="entry name" value="TrioseP_Isoase_bac/euk"/>
</dbReference>
<dbReference type="InterPro" id="IPR000652">
    <property type="entry name" value="Triosephosphate_isomerase"/>
</dbReference>
<dbReference type="InterPro" id="IPR020861">
    <property type="entry name" value="Triosephosphate_isomerase_AS"/>
</dbReference>
<dbReference type="NCBIfam" id="TIGR00419">
    <property type="entry name" value="tim"/>
    <property type="match status" value="1"/>
</dbReference>
<dbReference type="PANTHER" id="PTHR21139">
    <property type="entry name" value="TRIOSEPHOSPHATE ISOMERASE"/>
    <property type="match status" value="1"/>
</dbReference>
<dbReference type="PANTHER" id="PTHR21139:SF42">
    <property type="entry name" value="TRIOSEPHOSPHATE ISOMERASE"/>
    <property type="match status" value="1"/>
</dbReference>
<dbReference type="Pfam" id="PF00121">
    <property type="entry name" value="TIM"/>
    <property type="match status" value="1"/>
</dbReference>
<dbReference type="SUPFAM" id="SSF51351">
    <property type="entry name" value="Triosephosphate isomerase (TIM)"/>
    <property type="match status" value="1"/>
</dbReference>
<dbReference type="PROSITE" id="PS00171">
    <property type="entry name" value="TIM_1"/>
    <property type="match status" value="1"/>
</dbReference>
<dbReference type="PROSITE" id="PS51440">
    <property type="entry name" value="TIM_2"/>
    <property type="match status" value="1"/>
</dbReference>
<comment type="function">
    <text evidence="1">Involved in the gluconeogenesis. Catalyzes stereospecifically the conversion of dihydroxyacetone phosphate (DHAP) to D-glyceraldehyde-3-phosphate (G3P).</text>
</comment>
<comment type="catalytic activity">
    <reaction evidence="1">
        <text>D-glyceraldehyde 3-phosphate = dihydroxyacetone phosphate</text>
        <dbReference type="Rhea" id="RHEA:18585"/>
        <dbReference type="ChEBI" id="CHEBI:57642"/>
        <dbReference type="ChEBI" id="CHEBI:59776"/>
        <dbReference type="EC" id="5.3.1.1"/>
    </reaction>
</comment>
<comment type="pathway">
    <text evidence="1">Carbohydrate biosynthesis; gluconeogenesis.</text>
</comment>
<comment type="pathway">
    <text evidence="1">Carbohydrate degradation; glycolysis; D-glyceraldehyde 3-phosphate from glycerone phosphate: step 1/1.</text>
</comment>
<comment type="subunit">
    <text evidence="1">Homodimer.</text>
</comment>
<comment type="subcellular location">
    <subcellularLocation>
        <location evidence="1">Cytoplasm</location>
    </subcellularLocation>
</comment>
<comment type="similarity">
    <text evidence="1">Belongs to the triosephosphate isomerase family.</text>
</comment>
<accession>B5XKI2</accession>
<proteinExistence type="inferred from homology"/>